<accession>C7GLU4</accession>
<organism>
    <name type="scientific">Saccharomyces cerevisiae (strain JAY291)</name>
    <name type="common">Baker's yeast</name>
    <dbReference type="NCBI Taxonomy" id="574961"/>
    <lineage>
        <taxon>Eukaryota</taxon>
        <taxon>Fungi</taxon>
        <taxon>Dikarya</taxon>
        <taxon>Ascomycota</taxon>
        <taxon>Saccharomycotina</taxon>
        <taxon>Saccharomycetes</taxon>
        <taxon>Saccharomycetales</taxon>
        <taxon>Saccharomycetaceae</taxon>
        <taxon>Saccharomyces</taxon>
    </lineage>
</organism>
<feature type="chain" id="PRO_0000409321" description="Vacuolar membrane protein C1Q_01198">
    <location>
        <begin position="1"/>
        <end position="314"/>
    </location>
</feature>
<feature type="transmembrane region" description="Helical" evidence="3">
    <location>
        <begin position="93"/>
        <end position="113"/>
    </location>
</feature>
<feature type="region of interest" description="Disordered" evidence="4">
    <location>
        <begin position="32"/>
        <end position="60"/>
    </location>
</feature>
<feature type="region of interest" description="Disordered" evidence="4">
    <location>
        <begin position="240"/>
        <end position="309"/>
    </location>
</feature>
<feature type="compositionally biased region" description="Basic and acidic residues" evidence="4">
    <location>
        <begin position="254"/>
        <end position="269"/>
    </location>
</feature>
<feature type="modified residue" description="Phosphoserine" evidence="2">
    <location>
        <position position="148"/>
    </location>
</feature>
<feature type="modified residue" description="Phosphoserine" evidence="2">
    <location>
        <position position="254"/>
    </location>
</feature>
<feature type="modified residue" description="Phosphoserine" evidence="2">
    <location>
        <position position="274"/>
    </location>
</feature>
<name>YNF8_YEAS2</name>
<sequence length="314" mass="34728">MVKKNFIPSVSLVRRDLPTLVTTTTSSTALSKPTSSVVSETSSKSLPSLTSSAFSTSSGATSSSSLIVASITPPSTAGNPFILNAADKPNGTVYIAVGAVIGAIFISILIWWLVSSYLSRRFTMTNSYANDSKNLYRGHHKHSSSLQSNPFDINDEKSYMQDDWDSMSQLESSQYEDAASPFNPIQDPFTDNRRSLFISPTLQVSQYEKSHSRHQSKDTNIFIDDPSLYVGTYLEEEEEEERKLNLNRPQRAASPERKEKKINSMEGYHKRNQSSLGLIPVASATSNTSSPKKAHKRQAPSMFLDDVLNGREII</sequence>
<keyword id="KW-0472">Membrane</keyword>
<keyword id="KW-0597">Phosphoprotein</keyword>
<keyword id="KW-0812">Transmembrane</keyword>
<keyword id="KW-1133">Transmembrane helix</keyword>
<keyword id="KW-0926">Vacuole</keyword>
<dbReference type="EMBL" id="ACFL01000040">
    <property type="protein sequence ID" value="EEU08208.1"/>
    <property type="molecule type" value="Genomic_DNA"/>
</dbReference>
<dbReference type="Proteomes" id="UP000008073">
    <property type="component" value="Unassembled WGS sequence"/>
</dbReference>
<dbReference type="GO" id="GO:0005935">
    <property type="term" value="C:cellular bud neck"/>
    <property type="evidence" value="ECO:0007669"/>
    <property type="project" value="TreeGrafter"/>
</dbReference>
<dbReference type="GO" id="GO:0000324">
    <property type="term" value="C:fungal-type vacuole"/>
    <property type="evidence" value="ECO:0007669"/>
    <property type="project" value="TreeGrafter"/>
</dbReference>
<dbReference type="GO" id="GO:0005774">
    <property type="term" value="C:vacuolar membrane"/>
    <property type="evidence" value="ECO:0007669"/>
    <property type="project" value="UniProtKB-SubCell"/>
</dbReference>
<dbReference type="InterPro" id="IPR051009">
    <property type="entry name" value="PRM"/>
</dbReference>
<dbReference type="PANTHER" id="PTHR36089">
    <property type="entry name" value="CHITIN SYNTHASE 3 COMPLEX PROTEIN CSI2-RELATED"/>
    <property type="match status" value="1"/>
</dbReference>
<dbReference type="PANTHER" id="PTHR36089:SF1">
    <property type="entry name" value="CHITIN SYNTHASE 3 COMPLEX PROTEIN CSI2-RELATED"/>
    <property type="match status" value="1"/>
</dbReference>
<evidence type="ECO:0000250" key="1"/>
<evidence type="ECO:0000250" key="2">
    <source>
        <dbReference type="UniProtKB" id="P53947"/>
    </source>
</evidence>
<evidence type="ECO:0000255" key="3"/>
<evidence type="ECO:0000256" key="4">
    <source>
        <dbReference type="SAM" id="MobiDB-lite"/>
    </source>
</evidence>
<evidence type="ECO:0000305" key="5"/>
<gene>
    <name type="ORF">C1Q_01198</name>
</gene>
<proteinExistence type="inferred from homology"/>
<protein>
    <recommendedName>
        <fullName>Vacuolar membrane protein C1Q_01198</fullName>
    </recommendedName>
</protein>
<comment type="subcellular location">
    <subcellularLocation>
        <location evidence="1">Vacuole membrane</location>
        <topology evidence="1">Single-pass membrane protein</topology>
    </subcellularLocation>
</comment>
<comment type="similarity">
    <text evidence="5">Belongs to the PRM5 family.</text>
</comment>
<reference key="1">
    <citation type="journal article" date="2009" name="Genome Res.">
        <title>Genome structure of a Saccharomyces cerevisiae strain widely used in bioethanol production.</title>
        <authorList>
            <person name="Argueso J.L."/>
            <person name="Carazzolle M.F."/>
            <person name="Mieczkowski P.A."/>
            <person name="Duarte F.M."/>
            <person name="Netto O.V.C."/>
            <person name="Missawa S.K."/>
            <person name="Galzerani F."/>
            <person name="Costa G.G.L."/>
            <person name="Vidal R.O."/>
            <person name="Noronha M.F."/>
            <person name="Dominska M."/>
            <person name="Andrietta M.G.S."/>
            <person name="Andrietta S.R."/>
            <person name="Cunha A.F."/>
            <person name="Gomes L.H."/>
            <person name="Tavares F.C.A."/>
            <person name="Alcarde A.R."/>
            <person name="Dietrich F.S."/>
            <person name="McCusker J.H."/>
            <person name="Petes T.D."/>
            <person name="Pereira G.A.G."/>
        </authorList>
    </citation>
    <scope>NUCLEOTIDE SEQUENCE [LARGE SCALE GENOMIC DNA]</scope>
    <source>
        <strain>JAY291</strain>
    </source>
</reference>